<gene>
    <name type="primary">AMMECR1</name>
</gene>
<name>AMMR1_HUMAN</name>
<protein>
    <recommendedName>
        <fullName evidence="9">Nuclear protein AMMECR1</fullName>
    </recommendedName>
    <alternativeName>
        <fullName>AMME syndrome candidate gene 1 protein</fullName>
    </alternativeName>
</protein>
<feature type="chain" id="PRO_0000142366" description="Nuclear protein AMMECR1">
    <location>
        <begin position="1"/>
        <end position="333"/>
    </location>
</feature>
<feature type="domain" description="AMMECR1" evidence="1">
    <location>
        <begin position="119"/>
        <end position="313"/>
    </location>
</feature>
<feature type="region of interest" description="Disordered" evidence="2">
    <location>
        <begin position="1"/>
        <end position="39"/>
    </location>
</feature>
<feature type="region of interest" description="Disordered" evidence="2">
    <location>
        <begin position="101"/>
        <end position="120"/>
    </location>
</feature>
<feature type="compositionally biased region" description="Low complexity" evidence="2">
    <location>
        <begin position="28"/>
        <end position="37"/>
    </location>
</feature>
<feature type="compositionally biased region" description="Low complexity" evidence="2">
    <location>
        <begin position="101"/>
        <end position="119"/>
    </location>
</feature>
<feature type="modified residue" description="Phosphoserine" evidence="10">
    <location>
        <position position="16"/>
    </location>
</feature>
<feature type="splice variant" id="VSP_044229" description="In isoform 4." evidence="7">
    <location>
        <begin position="1"/>
        <end position="123"/>
    </location>
</feature>
<feature type="splice variant" id="VSP_008516" description="In isoform 2." evidence="6">
    <location>
        <begin position="158"/>
        <end position="333"/>
    </location>
</feature>
<feature type="splice variant" id="VSP_017058" description="In isoform 3." evidence="8">
    <location>
        <begin position="159"/>
        <end position="195"/>
    </location>
</feature>
<feature type="sequence variant" id="VAR_078027" description="In MFHIEN; creates a novel nonuniform expression pattern in the nucleus; dbSNP:rs1057519337." evidence="4">
    <original>G</original>
    <variation>D</variation>
    <location>
        <position position="177"/>
    </location>
</feature>
<dbReference type="EMBL" id="AJ007014">
    <property type="protein sequence ID" value="CAB45546.1"/>
    <property type="molecule type" value="mRNA"/>
</dbReference>
<dbReference type="EMBL" id="AK091430">
    <property type="protein sequence ID" value="BAG52359.1"/>
    <property type="molecule type" value="mRNA"/>
</dbReference>
<dbReference type="EMBL" id="AJ012221">
    <property type="protein sequence ID" value="CAB58122.1"/>
    <property type="molecule type" value="Genomic_DNA"/>
</dbReference>
<dbReference type="EMBL" id="AJ012222">
    <property type="protein sequence ID" value="CAB58122.1"/>
    <property type="status" value="JOINED"/>
    <property type="molecule type" value="Genomic_DNA"/>
</dbReference>
<dbReference type="EMBL" id="AJ012223">
    <property type="protein sequence ID" value="CAB58122.1"/>
    <property type="status" value="JOINED"/>
    <property type="molecule type" value="Genomic_DNA"/>
</dbReference>
<dbReference type="EMBL" id="AJ012224">
    <property type="protein sequence ID" value="CAB58122.1"/>
    <property type="status" value="JOINED"/>
    <property type="molecule type" value="Genomic_DNA"/>
</dbReference>
<dbReference type="EMBL" id="AJ012225">
    <property type="protein sequence ID" value="CAB58122.1"/>
    <property type="status" value="JOINED"/>
    <property type="molecule type" value="Genomic_DNA"/>
</dbReference>
<dbReference type="EMBL" id="AJ012226">
    <property type="protein sequence ID" value="CAB58122.1"/>
    <property type="status" value="JOINED"/>
    <property type="molecule type" value="Genomic_DNA"/>
</dbReference>
<dbReference type="EMBL" id="AJ012221">
    <property type="protein sequence ID" value="CAB58123.1"/>
    <property type="molecule type" value="Genomic_DNA"/>
</dbReference>
<dbReference type="EMBL" id="AJ012227">
    <property type="protein sequence ID" value="CAB58123.1"/>
    <property type="status" value="JOINED"/>
    <property type="molecule type" value="Genomic_DNA"/>
</dbReference>
<dbReference type="EMBL" id="AL079334">
    <property type="protein sequence ID" value="CAI42537.1"/>
    <property type="molecule type" value="Genomic_DNA"/>
</dbReference>
<dbReference type="EMBL" id="AL031319">
    <property type="protein sequence ID" value="CAI42537.1"/>
    <property type="status" value="JOINED"/>
    <property type="molecule type" value="Genomic_DNA"/>
</dbReference>
<dbReference type="EMBL" id="AL359079">
    <property type="protein sequence ID" value="CAI42537.1"/>
    <property type="status" value="JOINED"/>
    <property type="molecule type" value="Genomic_DNA"/>
</dbReference>
<dbReference type="EMBL" id="AL079334">
    <property type="protein sequence ID" value="CAI42538.1"/>
    <property type="molecule type" value="Genomic_DNA"/>
</dbReference>
<dbReference type="EMBL" id="AL031319">
    <property type="protein sequence ID" value="CAI42538.1"/>
    <property type="status" value="JOINED"/>
    <property type="molecule type" value="Genomic_DNA"/>
</dbReference>
<dbReference type="EMBL" id="AL359079">
    <property type="protein sequence ID" value="CAI42538.1"/>
    <property type="status" value="JOINED"/>
    <property type="molecule type" value="Genomic_DNA"/>
</dbReference>
<dbReference type="EMBL" id="AL359079">
    <property type="protein sequence ID" value="CAI41539.1"/>
    <property type="molecule type" value="Genomic_DNA"/>
</dbReference>
<dbReference type="EMBL" id="AL031319">
    <property type="protein sequence ID" value="CAI41539.1"/>
    <property type="status" value="JOINED"/>
    <property type="molecule type" value="Genomic_DNA"/>
</dbReference>
<dbReference type="EMBL" id="AL079334">
    <property type="protein sequence ID" value="CAI41539.1"/>
    <property type="status" value="JOINED"/>
    <property type="molecule type" value="Genomic_DNA"/>
</dbReference>
<dbReference type="EMBL" id="AL359079">
    <property type="protein sequence ID" value="CAI41540.1"/>
    <property type="molecule type" value="Genomic_DNA"/>
</dbReference>
<dbReference type="EMBL" id="AL031319">
    <property type="protein sequence ID" value="CAI41540.1"/>
    <property type="status" value="JOINED"/>
    <property type="molecule type" value="Genomic_DNA"/>
</dbReference>
<dbReference type="EMBL" id="AL079334">
    <property type="protein sequence ID" value="CAI41540.1"/>
    <property type="status" value="JOINED"/>
    <property type="molecule type" value="Genomic_DNA"/>
</dbReference>
<dbReference type="EMBL" id="AL031319">
    <property type="protein sequence ID" value="CAI42703.1"/>
    <property type="molecule type" value="Genomic_DNA"/>
</dbReference>
<dbReference type="EMBL" id="AL079334">
    <property type="protein sequence ID" value="CAI42703.1"/>
    <property type="status" value="JOINED"/>
    <property type="molecule type" value="Genomic_DNA"/>
</dbReference>
<dbReference type="EMBL" id="AL359079">
    <property type="protein sequence ID" value="CAI42703.1"/>
    <property type="status" value="JOINED"/>
    <property type="molecule type" value="Genomic_DNA"/>
</dbReference>
<dbReference type="EMBL" id="AL031319">
    <property type="protein sequence ID" value="CAI42704.1"/>
    <property type="molecule type" value="Genomic_DNA"/>
</dbReference>
<dbReference type="EMBL" id="AL079334">
    <property type="protein sequence ID" value="CAI42704.1"/>
    <property type="status" value="JOINED"/>
    <property type="molecule type" value="Genomic_DNA"/>
</dbReference>
<dbReference type="EMBL" id="AL359079">
    <property type="protein sequence ID" value="CAI42704.1"/>
    <property type="status" value="JOINED"/>
    <property type="molecule type" value="Genomic_DNA"/>
</dbReference>
<dbReference type="EMBL" id="BC060813">
    <property type="protein sequence ID" value="AAH60813.1"/>
    <property type="molecule type" value="mRNA"/>
</dbReference>
<dbReference type="CCDS" id="CCDS14551.1">
    <molecule id="Q9Y4X0-1"/>
</dbReference>
<dbReference type="CCDS" id="CCDS35368.1">
    <molecule id="Q9Y4X0-3"/>
</dbReference>
<dbReference type="CCDS" id="CCDS55476.1">
    <molecule id="Q9Y4X0-4"/>
</dbReference>
<dbReference type="RefSeq" id="NP_001020751.1">
    <molecule id="Q9Y4X0-3"/>
    <property type="nucleotide sequence ID" value="NM_001025580.2"/>
</dbReference>
<dbReference type="RefSeq" id="NP_001165160.1">
    <molecule id="Q9Y4X0-4"/>
    <property type="nucleotide sequence ID" value="NM_001171689.2"/>
</dbReference>
<dbReference type="RefSeq" id="NP_056180.1">
    <molecule id="Q9Y4X0-1"/>
    <property type="nucleotide sequence ID" value="NM_015365.3"/>
</dbReference>
<dbReference type="SMR" id="Q9Y4X0"/>
<dbReference type="BioGRID" id="115274">
    <property type="interactions" value="32"/>
</dbReference>
<dbReference type="FunCoup" id="Q9Y4X0">
    <property type="interactions" value="3012"/>
</dbReference>
<dbReference type="IntAct" id="Q9Y4X0">
    <property type="interactions" value="35"/>
</dbReference>
<dbReference type="MINT" id="Q9Y4X0"/>
<dbReference type="STRING" id="9606.ENSP00000262844"/>
<dbReference type="iPTMnet" id="Q9Y4X0"/>
<dbReference type="PhosphoSitePlus" id="Q9Y4X0"/>
<dbReference type="SwissPalm" id="Q9Y4X0"/>
<dbReference type="BioMuta" id="AMMECR1"/>
<dbReference type="DMDM" id="48475039"/>
<dbReference type="jPOST" id="Q9Y4X0"/>
<dbReference type="MassIVE" id="Q9Y4X0"/>
<dbReference type="PaxDb" id="9606-ENSP00000262844"/>
<dbReference type="PeptideAtlas" id="Q9Y4X0"/>
<dbReference type="ProteomicsDB" id="63517"/>
<dbReference type="ProteomicsDB" id="86255">
    <molecule id="Q9Y4X0-1"/>
</dbReference>
<dbReference type="ProteomicsDB" id="86256">
    <molecule id="Q9Y4X0-2"/>
</dbReference>
<dbReference type="ProteomicsDB" id="86257">
    <molecule id="Q9Y4X0-3"/>
</dbReference>
<dbReference type="Pumba" id="Q9Y4X0"/>
<dbReference type="Antibodypedia" id="29496">
    <property type="antibodies" value="128 antibodies from 23 providers"/>
</dbReference>
<dbReference type="DNASU" id="9949"/>
<dbReference type="Ensembl" id="ENST00000262844.10">
    <molecule id="Q9Y4X0-1"/>
    <property type="protein sequence ID" value="ENSP00000262844.5"/>
    <property type="gene ID" value="ENSG00000101935.13"/>
</dbReference>
<dbReference type="Ensembl" id="ENST00000372057.1">
    <molecule id="Q9Y4X0-4"/>
    <property type="protein sequence ID" value="ENSP00000361127.1"/>
    <property type="gene ID" value="ENSG00000101935.13"/>
</dbReference>
<dbReference type="Ensembl" id="ENST00000372059.6">
    <molecule id="Q9Y4X0-3"/>
    <property type="protein sequence ID" value="ENSP00000361129.2"/>
    <property type="gene ID" value="ENSG00000101935.13"/>
</dbReference>
<dbReference type="GeneID" id="9949"/>
<dbReference type="KEGG" id="hsa:9949"/>
<dbReference type="MANE-Select" id="ENST00000262844.10">
    <property type="protein sequence ID" value="ENSP00000262844.5"/>
    <property type="RefSeq nucleotide sequence ID" value="NM_015365.3"/>
    <property type="RefSeq protein sequence ID" value="NP_056180.1"/>
</dbReference>
<dbReference type="UCSC" id="uc004eoo.4">
    <molecule id="Q9Y4X0-1"/>
    <property type="organism name" value="human"/>
</dbReference>
<dbReference type="AGR" id="HGNC:467"/>
<dbReference type="CTD" id="9949"/>
<dbReference type="DisGeNET" id="9949"/>
<dbReference type="GeneCards" id="AMMECR1"/>
<dbReference type="HGNC" id="HGNC:467">
    <property type="gene designation" value="AMMECR1"/>
</dbReference>
<dbReference type="HPA" id="ENSG00000101935">
    <property type="expression patterns" value="Low tissue specificity"/>
</dbReference>
<dbReference type="MalaCards" id="AMMECR1"/>
<dbReference type="MIM" id="300194">
    <property type="type" value="phenotype"/>
</dbReference>
<dbReference type="MIM" id="300195">
    <property type="type" value="gene"/>
</dbReference>
<dbReference type="MIM" id="300990">
    <property type="type" value="phenotype"/>
</dbReference>
<dbReference type="neXtProt" id="NX_Q9Y4X0"/>
<dbReference type="OpenTargets" id="ENSG00000101935"/>
<dbReference type="Orphanet" id="86818">
    <property type="disease" value="Alport syndrome-intellectual disability-midface hypoplasia-elliptocytosis syndrome"/>
</dbReference>
<dbReference type="Orphanet" id="688581">
    <property type="disease" value="Midface hypoplasia-hearing impairment-elliptocytosis-nephrocalcinosis syndrome"/>
</dbReference>
<dbReference type="PharmGKB" id="PA24772"/>
<dbReference type="VEuPathDB" id="HostDB:ENSG00000101935"/>
<dbReference type="eggNOG" id="KOG3274">
    <property type="taxonomic scope" value="Eukaryota"/>
</dbReference>
<dbReference type="GeneTree" id="ENSGT00390000010397"/>
<dbReference type="HOGENOM" id="CLU_052828_0_0_1"/>
<dbReference type="InParanoid" id="Q9Y4X0"/>
<dbReference type="OMA" id="YAEYIGH"/>
<dbReference type="OrthoDB" id="24630at2759"/>
<dbReference type="PAN-GO" id="Q9Y4X0">
    <property type="GO annotations" value="1 GO annotation based on evolutionary models"/>
</dbReference>
<dbReference type="PhylomeDB" id="Q9Y4X0"/>
<dbReference type="TreeFam" id="TF314680"/>
<dbReference type="PathwayCommons" id="Q9Y4X0"/>
<dbReference type="SignaLink" id="Q9Y4X0"/>
<dbReference type="BioGRID-ORCS" id="9949">
    <property type="hits" value="10 hits in 773 CRISPR screens"/>
</dbReference>
<dbReference type="ChiTaRS" id="AMMECR1">
    <property type="organism name" value="human"/>
</dbReference>
<dbReference type="GenomeRNAi" id="9949"/>
<dbReference type="Pharos" id="Q9Y4X0">
    <property type="development level" value="Tbio"/>
</dbReference>
<dbReference type="PRO" id="PR:Q9Y4X0"/>
<dbReference type="Proteomes" id="UP000005640">
    <property type="component" value="Chromosome X"/>
</dbReference>
<dbReference type="RNAct" id="Q9Y4X0">
    <property type="molecule type" value="protein"/>
</dbReference>
<dbReference type="Bgee" id="ENSG00000101935">
    <property type="expression patterns" value="Expressed in esophagus squamous epithelium and 179 other cell types or tissues"/>
</dbReference>
<dbReference type="ExpressionAtlas" id="Q9Y4X0">
    <property type="expression patterns" value="baseline and differential"/>
</dbReference>
<dbReference type="GO" id="GO:0005739">
    <property type="term" value="C:mitochondrion"/>
    <property type="evidence" value="ECO:0000314"/>
    <property type="project" value="HPA"/>
</dbReference>
<dbReference type="GO" id="GO:0005654">
    <property type="term" value="C:nucleoplasm"/>
    <property type="evidence" value="ECO:0000314"/>
    <property type="project" value="HPA"/>
</dbReference>
<dbReference type="GO" id="GO:0005634">
    <property type="term" value="C:nucleus"/>
    <property type="evidence" value="ECO:0000314"/>
    <property type="project" value="UniProtKB"/>
</dbReference>
<dbReference type="FunFam" id="3.30.700.20:FF:000001">
    <property type="entry name" value="AMME syndrome candidate gene 1"/>
    <property type="match status" value="1"/>
</dbReference>
<dbReference type="Gene3D" id="3.30.700.20">
    <property type="entry name" value="Hypothetical protein ph0010, domain 1"/>
    <property type="match status" value="1"/>
</dbReference>
<dbReference type="InterPro" id="IPR023473">
    <property type="entry name" value="AMMECR1"/>
</dbReference>
<dbReference type="InterPro" id="IPR036071">
    <property type="entry name" value="AMMECR1_dom_sf"/>
</dbReference>
<dbReference type="InterPro" id="IPR002733">
    <property type="entry name" value="AMMECR1_domain"/>
</dbReference>
<dbReference type="InterPro" id="IPR027485">
    <property type="entry name" value="AMMECR1_N"/>
</dbReference>
<dbReference type="NCBIfam" id="TIGR00296">
    <property type="entry name" value="TIGR00296 family protein"/>
    <property type="match status" value="1"/>
</dbReference>
<dbReference type="PANTHER" id="PTHR13016">
    <property type="entry name" value="AMMECR1 HOMOLOG"/>
    <property type="match status" value="1"/>
</dbReference>
<dbReference type="PANTHER" id="PTHR13016:SF2">
    <property type="entry name" value="NUCLEAR PROTEIN AMMECR1"/>
    <property type="match status" value="1"/>
</dbReference>
<dbReference type="Pfam" id="PF01871">
    <property type="entry name" value="AMMECR1"/>
    <property type="match status" value="1"/>
</dbReference>
<dbReference type="SUPFAM" id="SSF143447">
    <property type="entry name" value="AMMECR1-like"/>
    <property type="match status" value="1"/>
</dbReference>
<dbReference type="PROSITE" id="PS51112">
    <property type="entry name" value="AMMECR1"/>
    <property type="match status" value="1"/>
</dbReference>
<accession>Q9Y4X0</accession>
<accession>Q5JYV9</accession>
<accession>Q6P9D8</accession>
<accession>Q8WX22</accession>
<accession>Q9UIQ8</accession>
<comment type="interaction">
    <interactant intactId="EBI-8583355">
        <id>Q9Y4X0</id>
    </interactant>
    <interactant intactId="EBI-10173507">
        <id>Q6UY14-3</id>
        <label>ADAMTSL4</label>
    </interactant>
    <organismsDiffer>false</organismsDiffer>
    <experiments>3</experiments>
</comment>
<comment type="interaction">
    <interactant intactId="EBI-8583355">
        <id>Q9Y4X0</id>
    </interactant>
    <interactant intactId="EBI-739580">
        <id>Q13137</id>
        <label>CALCOCO2</label>
    </interactant>
    <organismsDiffer>false</organismsDiffer>
    <experiments>4</experiments>
</comment>
<comment type="interaction">
    <interactant intactId="EBI-8583355">
        <id>Q9Y4X0</id>
    </interactant>
    <interactant intactId="EBI-743414">
        <id>O95967</id>
        <label>EFEMP2</label>
    </interactant>
    <organismsDiffer>false</organismsDiffer>
    <experiments>3</experiments>
</comment>
<comment type="interaction">
    <interactant intactId="EBI-8583355">
        <id>Q9Y4X0</id>
    </interactant>
    <interactant intactId="EBI-10171774">
        <id>P60410</id>
        <label>KRTAP10-8</label>
    </interactant>
    <organismsDiffer>false</organismsDiffer>
    <experiments>3</experiments>
</comment>
<comment type="interaction">
    <interactant intactId="EBI-8583355">
        <id>Q9Y4X0</id>
    </interactant>
    <interactant intactId="EBI-910915">
        <id>O75581</id>
        <label>LRP6</label>
    </interactant>
    <organismsDiffer>false</organismsDiffer>
    <experiments>5</experiments>
</comment>
<comment type="interaction">
    <interactant intactId="EBI-8583355">
        <id>Q9Y4X0</id>
    </interactant>
    <interactant intactId="EBI-740322">
        <id>Q93062</id>
        <label>RBPMS</label>
    </interactant>
    <organismsDiffer>false</organismsDiffer>
    <experiments>4</experiments>
</comment>
<comment type="interaction">
    <interactant intactId="EBI-8583355">
        <id>Q9Y4X0</id>
    </interactant>
    <interactant intactId="EBI-719493">
        <id>P14373</id>
        <label>TRIM27</label>
    </interactant>
    <organismsDiffer>false</organismsDiffer>
    <experiments>3</experiments>
</comment>
<comment type="interaction">
    <interactant intactId="EBI-8583355">
        <id>Q9Y4X0</id>
    </interactant>
    <interactant intactId="EBI-6857773">
        <id>O70239</id>
        <label>Axin1</label>
    </interactant>
    <organismsDiffer>true</organismsDiffer>
    <experiments>3</experiments>
</comment>
<comment type="interaction">
    <interactant intactId="EBI-8583355">
        <id>Q9Y4X0</id>
    </interactant>
    <interactant intactId="EBI-8583566">
        <id>Q6NRT0</id>
        <label>csnk1g1</label>
    </interactant>
    <organismsDiffer>true</organismsDiffer>
    <experiments>2</experiments>
</comment>
<comment type="interaction">
    <interactant intactId="EBI-12823597">
        <id>Q9Y4X0-3</id>
    </interactant>
    <interactant intactId="EBI-10173507">
        <id>Q6UY14-3</id>
        <label>ADAMTSL4</label>
    </interactant>
    <organismsDiffer>false</organismsDiffer>
    <experiments>3</experiments>
</comment>
<comment type="interaction">
    <interactant intactId="EBI-12823597">
        <id>Q9Y4X0-3</id>
    </interactant>
    <interactant intactId="EBI-739580">
        <id>Q13137</id>
        <label>CALCOCO2</label>
    </interactant>
    <organismsDiffer>false</organismsDiffer>
    <experiments>3</experiments>
</comment>
<comment type="interaction">
    <interactant intactId="EBI-12823597">
        <id>Q9Y4X0-3</id>
    </interactant>
    <interactant intactId="EBI-3867333">
        <id>A8MQ03</id>
        <label>CYSRT1</label>
    </interactant>
    <organismsDiffer>false</organismsDiffer>
    <experiments>3</experiments>
</comment>
<comment type="interaction">
    <interactant intactId="EBI-12823597">
        <id>Q9Y4X0-3</id>
    </interactant>
    <interactant intactId="EBI-743414">
        <id>O95967</id>
        <label>EFEMP2</label>
    </interactant>
    <organismsDiffer>false</organismsDiffer>
    <experiments>3</experiments>
</comment>
<comment type="interaction">
    <interactant intactId="EBI-12823597">
        <id>Q9Y4X0-3</id>
    </interactant>
    <interactant intactId="EBI-740785">
        <id>P49639</id>
        <label>HOXA1</label>
    </interactant>
    <organismsDiffer>false</organismsDiffer>
    <experiments>3</experiments>
</comment>
<comment type="interaction">
    <interactant intactId="EBI-12823597">
        <id>Q9Y4X0-3</id>
    </interactant>
    <interactant intactId="EBI-2880706">
        <id>O43593</id>
        <label>HR</label>
    </interactant>
    <organismsDiffer>false</organismsDiffer>
    <experiments>3</experiments>
</comment>
<comment type="interaction">
    <interactant intactId="EBI-12823597">
        <id>Q9Y4X0-3</id>
    </interactant>
    <interactant intactId="EBI-10171774">
        <id>P60410</id>
        <label>KRTAP10-8</label>
    </interactant>
    <organismsDiffer>false</organismsDiffer>
    <experiments>3</experiments>
</comment>
<comment type="interaction">
    <interactant intactId="EBI-12823597">
        <id>Q9Y4X0-3</id>
    </interactant>
    <interactant intactId="EBI-16439278">
        <id>Q6FHY5</id>
        <label>MEOX2</label>
    </interactant>
    <organismsDiffer>false</organismsDiffer>
    <experiments>3</experiments>
</comment>
<comment type="interaction">
    <interactant intactId="EBI-12823597">
        <id>Q9Y4X0-3</id>
    </interactant>
    <interactant intactId="EBI-50433196">
        <id>A0A6Q8PF08</id>
        <label>PMP22</label>
    </interactant>
    <organismsDiffer>false</organismsDiffer>
    <experiments>3</experiments>
</comment>
<comment type="interaction">
    <interactant intactId="EBI-12823597">
        <id>Q9Y4X0-3</id>
    </interactant>
    <interactant intactId="EBI-750487">
        <id>Q8WW24</id>
        <label>TEKT4</label>
    </interactant>
    <organismsDiffer>false</organismsDiffer>
    <experiments>3</experiments>
</comment>
<comment type="interaction">
    <interactant intactId="EBI-12823597">
        <id>Q9Y4X0-3</id>
    </interactant>
    <interactant intactId="EBI-949753">
        <id>Q63HR2</id>
        <label>TNS2</label>
    </interactant>
    <organismsDiffer>false</organismsDiffer>
    <experiments>3</experiments>
</comment>
<comment type="interaction">
    <interactant intactId="EBI-12823597">
        <id>Q9Y4X0-3</id>
    </interactant>
    <interactant intactId="EBI-2555767">
        <id>Q15973</id>
        <label>ZNF124</label>
    </interactant>
    <organismsDiffer>false</organismsDiffer>
    <experiments>3</experiments>
</comment>
<comment type="subcellular location">
    <subcellularLocation>
        <location evidence="4">Nucleus</location>
    </subcellularLocation>
</comment>
<comment type="alternative products">
    <event type="alternative splicing"/>
    <isoform>
        <id>Q9Y4X0-1</id>
        <name>1</name>
        <sequence type="displayed"/>
    </isoform>
    <isoform>
        <id>Q9Y4X0-2</id>
        <name>2</name>
        <sequence type="described" ref="VSP_008516"/>
    </isoform>
    <isoform>
        <id>Q9Y4X0-3</id>
        <name>3</name>
        <sequence type="described" ref="VSP_017058"/>
    </isoform>
    <isoform>
        <id>Q9Y4X0-4</id>
        <name>4</name>
        <sequence type="described" ref="VSP_044229"/>
    </isoform>
</comment>
<comment type="disease" evidence="4 5">
    <disease id="DI-04939">
        <name>Midface hypoplasia, hearing impairment, elliptocytosis, and nephrocalcinosis</name>
        <acronym>MFHIEN</acronym>
        <description>An X-linked recessive disorder with onset in early childhood, characterized by midface hypoplasia, hearing impairment, elliptocytosis, and nephrocalcinosis. Variable clinical features include anemia, and mild early motor or speech delay.</description>
        <dbReference type="MIM" id="300990"/>
    </disease>
    <text>The disease is caused by variants affecting the gene represented in this entry.</text>
</comment>
<comment type="disease" evidence="3">
    <disease id="DI-01183">
        <name>AMME complex</name>
        <acronym>ATS-MR</acronym>
        <description>An X-linked contiguous gene deletion syndrome characterized by glomerulonephritis, sensorineural hearing loss, intellectual disability, midface hypoplasia and elliptocytosis.</description>
        <dbReference type="MIM" id="300194"/>
    </disease>
    <text>The gene represented in this entry may be involved in disease pathogenesis.</text>
</comment>
<sequence length="333" mass="35463">MAAGCCGVKKQKLSSSPPSGSGGGGGASSSSHCSGESQCRAGELGLGGAGTRLNGLGGLTGGGSGSGCTLSPPQGCGGGGGGIALSPPPSCGVGTLLSTPAAATSSSPSSSSAASSSSPGSRKMVVSAEMCCFCFDVLYCHLYGYQQPRTPRFTNEPYPLFVTWKIGRDKRLRGCIGTFSAMNLHSGLREYTLTSALKDSRFPPMTRDELPRLFCSVSLLTNFEDVCDYLDWEVGVHGIRIEFINEKGSKRTATYLPEVAKEQGWDHIQTIDSLLRKGGYKAPITNEFRKTIKLTRYRSEKMTLSYAEYLAHRQHHHFQNGIGHPLPPYNHYS</sequence>
<organism>
    <name type="scientific">Homo sapiens</name>
    <name type="common">Human</name>
    <dbReference type="NCBI Taxonomy" id="9606"/>
    <lineage>
        <taxon>Eukaryota</taxon>
        <taxon>Metazoa</taxon>
        <taxon>Chordata</taxon>
        <taxon>Craniata</taxon>
        <taxon>Vertebrata</taxon>
        <taxon>Euteleostomi</taxon>
        <taxon>Mammalia</taxon>
        <taxon>Eutheria</taxon>
        <taxon>Euarchontoglires</taxon>
        <taxon>Primates</taxon>
        <taxon>Haplorrhini</taxon>
        <taxon>Catarrhini</taxon>
        <taxon>Hominidae</taxon>
        <taxon>Homo</taxon>
    </lineage>
</organism>
<reference key="1">
    <citation type="journal article" date="1999" name="Genomics">
        <title>Identification and characterization of a highly conserved protein absent in the Alport syndrome (A), mental retardation (M), midface hypoplasia (M), and elliptocytosis (E) contiguous gene deletion syndrome (AMME).</title>
        <authorList>
            <person name="Vitelli F."/>
            <person name="Piccini M."/>
            <person name="Caroli F."/>
            <person name="Franco B."/>
            <person name="Malandrini A."/>
            <person name="Pober B."/>
            <person name="Jonsson J."/>
            <person name="Sorrentino V."/>
            <person name="Renieri A."/>
        </authorList>
    </citation>
    <scope>NUCLEOTIDE SEQUENCE [MRNA] (ISOFORMS 1 AND 2)</scope>
    <scope>INVOLVEMENT IN ATS-MR</scope>
</reference>
<reference key="2">
    <citation type="journal article" date="2004" name="Nat. Genet.">
        <title>Complete sequencing and characterization of 21,243 full-length human cDNAs.</title>
        <authorList>
            <person name="Ota T."/>
            <person name="Suzuki Y."/>
            <person name="Nishikawa T."/>
            <person name="Otsuki T."/>
            <person name="Sugiyama T."/>
            <person name="Irie R."/>
            <person name="Wakamatsu A."/>
            <person name="Hayashi K."/>
            <person name="Sato H."/>
            <person name="Nagai K."/>
            <person name="Kimura K."/>
            <person name="Makita H."/>
            <person name="Sekine M."/>
            <person name="Obayashi M."/>
            <person name="Nishi T."/>
            <person name="Shibahara T."/>
            <person name="Tanaka T."/>
            <person name="Ishii S."/>
            <person name="Yamamoto J."/>
            <person name="Saito K."/>
            <person name="Kawai Y."/>
            <person name="Isono Y."/>
            <person name="Nakamura Y."/>
            <person name="Nagahari K."/>
            <person name="Murakami K."/>
            <person name="Yasuda T."/>
            <person name="Iwayanagi T."/>
            <person name="Wagatsuma M."/>
            <person name="Shiratori A."/>
            <person name="Sudo H."/>
            <person name="Hosoiri T."/>
            <person name="Kaku Y."/>
            <person name="Kodaira H."/>
            <person name="Kondo H."/>
            <person name="Sugawara M."/>
            <person name="Takahashi M."/>
            <person name="Kanda K."/>
            <person name="Yokoi T."/>
            <person name="Furuya T."/>
            <person name="Kikkawa E."/>
            <person name="Omura Y."/>
            <person name="Abe K."/>
            <person name="Kamihara K."/>
            <person name="Katsuta N."/>
            <person name="Sato K."/>
            <person name="Tanikawa M."/>
            <person name="Yamazaki M."/>
            <person name="Ninomiya K."/>
            <person name="Ishibashi T."/>
            <person name="Yamashita H."/>
            <person name="Murakawa K."/>
            <person name="Fujimori K."/>
            <person name="Tanai H."/>
            <person name="Kimata M."/>
            <person name="Watanabe M."/>
            <person name="Hiraoka S."/>
            <person name="Chiba Y."/>
            <person name="Ishida S."/>
            <person name="Ono Y."/>
            <person name="Takiguchi S."/>
            <person name="Watanabe S."/>
            <person name="Yosida M."/>
            <person name="Hotuta T."/>
            <person name="Kusano J."/>
            <person name="Kanehori K."/>
            <person name="Takahashi-Fujii A."/>
            <person name="Hara H."/>
            <person name="Tanase T.-O."/>
            <person name="Nomura Y."/>
            <person name="Togiya S."/>
            <person name="Komai F."/>
            <person name="Hara R."/>
            <person name="Takeuchi K."/>
            <person name="Arita M."/>
            <person name="Imose N."/>
            <person name="Musashino K."/>
            <person name="Yuuki H."/>
            <person name="Oshima A."/>
            <person name="Sasaki N."/>
            <person name="Aotsuka S."/>
            <person name="Yoshikawa Y."/>
            <person name="Matsunawa H."/>
            <person name="Ichihara T."/>
            <person name="Shiohata N."/>
            <person name="Sano S."/>
            <person name="Moriya S."/>
            <person name="Momiyama H."/>
            <person name="Satoh N."/>
            <person name="Takami S."/>
            <person name="Terashima Y."/>
            <person name="Suzuki O."/>
            <person name="Nakagawa S."/>
            <person name="Senoh A."/>
            <person name="Mizoguchi H."/>
            <person name="Goto Y."/>
            <person name="Shimizu F."/>
            <person name="Wakebe H."/>
            <person name="Hishigaki H."/>
            <person name="Watanabe T."/>
            <person name="Sugiyama A."/>
            <person name="Takemoto M."/>
            <person name="Kawakami B."/>
            <person name="Yamazaki M."/>
            <person name="Watanabe K."/>
            <person name="Kumagai A."/>
            <person name="Itakura S."/>
            <person name="Fukuzumi Y."/>
            <person name="Fujimori Y."/>
            <person name="Komiyama M."/>
            <person name="Tashiro H."/>
            <person name="Tanigami A."/>
            <person name="Fujiwara T."/>
            <person name="Ono T."/>
            <person name="Yamada K."/>
            <person name="Fujii Y."/>
            <person name="Ozaki K."/>
            <person name="Hirao M."/>
            <person name="Ohmori Y."/>
            <person name="Kawabata A."/>
            <person name="Hikiji T."/>
            <person name="Kobatake N."/>
            <person name="Inagaki H."/>
            <person name="Ikema Y."/>
            <person name="Okamoto S."/>
            <person name="Okitani R."/>
            <person name="Kawakami T."/>
            <person name="Noguchi S."/>
            <person name="Itoh T."/>
            <person name="Shigeta K."/>
            <person name="Senba T."/>
            <person name="Matsumura K."/>
            <person name="Nakajima Y."/>
            <person name="Mizuno T."/>
            <person name="Morinaga M."/>
            <person name="Sasaki M."/>
            <person name="Togashi T."/>
            <person name="Oyama M."/>
            <person name="Hata H."/>
            <person name="Watanabe M."/>
            <person name="Komatsu T."/>
            <person name="Mizushima-Sugano J."/>
            <person name="Satoh T."/>
            <person name="Shirai Y."/>
            <person name="Takahashi Y."/>
            <person name="Nakagawa K."/>
            <person name="Okumura K."/>
            <person name="Nagase T."/>
            <person name="Nomura N."/>
            <person name="Kikuchi H."/>
            <person name="Masuho Y."/>
            <person name="Yamashita R."/>
            <person name="Nakai K."/>
            <person name="Yada T."/>
            <person name="Nakamura Y."/>
            <person name="Ohara O."/>
            <person name="Isogai T."/>
            <person name="Sugano S."/>
        </authorList>
    </citation>
    <scope>NUCLEOTIDE SEQUENCE [LARGE SCALE MRNA] (ISOFORM 4)</scope>
    <source>
        <tissue>Brain</tissue>
    </source>
</reference>
<reference key="3">
    <citation type="journal article" date="2005" name="Nature">
        <title>The DNA sequence of the human X chromosome.</title>
        <authorList>
            <person name="Ross M.T."/>
            <person name="Grafham D.V."/>
            <person name="Coffey A.J."/>
            <person name="Scherer S."/>
            <person name="McLay K."/>
            <person name="Muzny D."/>
            <person name="Platzer M."/>
            <person name="Howell G.R."/>
            <person name="Burrows C."/>
            <person name="Bird C.P."/>
            <person name="Frankish A."/>
            <person name="Lovell F.L."/>
            <person name="Howe K.L."/>
            <person name="Ashurst J.L."/>
            <person name="Fulton R.S."/>
            <person name="Sudbrak R."/>
            <person name="Wen G."/>
            <person name="Jones M.C."/>
            <person name="Hurles M.E."/>
            <person name="Andrews T.D."/>
            <person name="Scott C.E."/>
            <person name="Searle S."/>
            <person name="Ramser J."/>
            <person name="Whittaker A."/>
            <person name="Deadman R."/>
            <person name="Carter N.P."/>
            <person name="Hunt S.E."/>
            <person name="Chen R."/>
            <person name="Cree A."/>
            <person name="Gunaratne P."/>
            <person name="Havlak P."/>
            <person name="Hodgson A."/>
            <person name="Metzker M.L."/>
            <person name="Richards S."/>
            <person name="Scott G."/>
            <person name="Steffen D."/>
            <person name="Sodergren E."/>
            <person name="Wheeler D.A."/>
            <person name="Worley K.C."/>
            <person name="Ainscough R."/>
            <person name="Ambrose K.D."/>
            <person name="Ansari-Lari M.A."/>
            <person name="Aradhya S."/>
            <person name="Ashwell R.I."/>
            <person name="Babbage A.K."/>
            <person name="Bagguley C.L."/>
            <person name="Ballabio A."/>
            <person name="Banerjee R."/>
            <person name="Barker G.E."/>
            <person name="Barlow K.F."/>
            <person name="Barrett I.P."/>
            <person name="Bates K.N."/>
            <person name="Beare D.M."/>
            <person name="Beasley H."/>
            <person name="Beasley O."/>
            <person name="Beck A."/>
            <person name="Bethel G."/>
            <person name="Blechschmidt K."/>
            <person name="Brady N."/>
            <person name="Bray-Allen S."/>
            <person name="Bridgeman A.M."/>
            <person name="Brown A.J."/>
            <person name="Brown M.J."/>
            <person name="Bonnin D."/>
            <person name="Bruford E.A."/>
            <person name="Buhay C."/>
            <person name="Burch P."/>
            <person name="Burford D."/>
            <person name="Burgess J."/>
            <person name="Burrill W."/>
            <person name="Burton J."/>
            <person name="Bye J.M."/>
            <person name="Carder C."/>
            <person name="Carrel L."/>
            <person name="Chako J."/>
            <person name="Chapman J.C."/>
            <person name="Chavez D."/>
            <person name="Chen E."/>
            <person name="Chen G."/>
            <person name="Chen Y."/>
            <person name="Chen Z."/>
            <person name="Chinault C."/>
            <person name="Ciccodicola A."/>
            <person name="Clark S.Y."/>
            <person name="Clarke G."/>
            <person name="Clee C.M."/>
            <person name="Clegg S."/>
            <person name="Clerc-Blankenburg K."/>
            <person name="Clifford K."/>
            <person name="Cobley V."/>
            <person name="Cole C.G."/>
            <person name="Conquer J.S."/>
            <person name="Corby N."/>
            <person name="Connor R.E."/>
            <person name="David R."/>
            <person name="Davies J."/>
            <person name="Davis C."/>
            <person name="Davis J."/>
            <person name="Delgado O."/>
            <person name="Deshazo D."/>
            <person name="Dhami P."/>
            <person name="Ding Y."/>
            <person name="Dinh H."/>
            <person name="Dodsworth S."/>
            <person name="Draper H."/>
            <person name="Dugan-Rocha S."/>
            <person name="Dunham A."/>
            <person name="Dunn M."/>
            <person name="Durbin K.J."/>
            <person name="Dutta I."/>
            <person name="Eades T."/>
            <person name="Ellwood M."/>
            <person name="Emery-Cohen A."/>
            <person name="Errington H."/>
            <person name="Evans K.L."/>
            <person name="Faulkner L."/>
            <person name="Francis F."/>
            <person name="Frankland J."/>
            <person name="Fraser A.E."/>
            <person name="Galgoczy P."/>
            <person name="Gilbert J."/>
            <person name="Gill R."/>
            <person name="Gloeckner G."/>
            <person name="Gregory S.G."/>
            <person name="Gribble S."/>
            <person name="Griffiths C."/>
            <person name="Grocock R."/>
            <person name="Gu Y."/>
            <person name="Gwilliam R."/>
            <person name="Hamilton C."/>
            <person name="Hart E.A."/>
            <person name="Hawes A."/>
            <person name="Heath P.D."/>
            <person name="Heitmann K."/>
            <person name="Hennig S."/>
            <person name="Hernandez J."/>
            <person name="Hinzmann B."/>
            <person name="Ho S."/>
            <person name="Hoffs M."/>
            <person name="Howden P.J."/>
            <person name="Huckle E.J."/>
            <person name="Hume J."/>
            <person name="Hunt P.J."/>
            <person name="Hunt A.R."/>
            <person name="Isherwood J."/>
            <person name="Jacob L."/>
            <person name="Johnson D."/>
            <person name="Jones S."/>
            <person name="de Jong P.J."/>
            <person name="Joseph S.S."/>
            <person name="Keenan S."/>
            <person name="Kelly S."/>
            <person name="Kershaw J.K."/>
            <person name="Khan Z."/>
            <person name="Kioschis P."/>
            <person name="Klages S."/>
            <person name="Knights A.J."/>
            <person name="Kosiura A."/>
            <person name="Kovar-Smith C."/>
            <person name="Laird G.K."/>
            <person name="Langford C."/>
            <person name="Lawlor S."/>
            <person name="Leversha M."/>
            <person name="Lewis L."/>
            <person name="Liu W."/>
            <person name="Lloyd C."/>
            <person name="Lloyd D.M."/>
            <person name="Loulseged H."/>
            <person name="Loveland J.E."/>
            <person name="Lovell J.D."/>
            <person name="Lozado R."/>
            <person name="Lu J."/>
            <person name="Lyne R."/>
            <person name="Ma J."/>
            <person name="Maheshwari M."/>
            <person name="Matthews L.H."/>
            <person name="McDowall J."/>
            <person name="McLaren S."/>
            <person name="McMurray A."/>
            <person name="Meidl P."/>
            <person name="Meitinger T."/>
            <person name="Milne S."/>
            <person name="Miner G."/>
            <person name="Mistry S.L."/>
            <person name="Morgan M."/>
            <person name="Morris S."/>
            <person name="Mueller I."/>
            <person name="Mullikin J.C."/>
            <person name="Nguyen N."/>
            <person name="Nordsiek G."/>
            <person name="Nyakatura G."/>
            <person name="O'dell C.N."/>
            <person name="Okwuonu G."/>
            <person name="Palmer S."/>
            <person name="Pandian R."/>
            <person name="Parker D."/>
            <person name="Parrish J."/>
            <person name="Pasternak S."/>
            <person name="Patel D."/>
            <person name="Pearce A.V."/>
            <person name="Pearson D.M."/>
            <person name="Pelan S.E."/>
            <person name="Perez L."/>
            <person name="Porter K.M."/>
            <person name="Ramsey Y."/>
            <person name="Reichwald K."/>
            <person name="Rhodes S."/>
            <person name="Ridler K.A."/>
            <person name="Schlessinger D."/>
            <person name="Schueler M.G."/>
            <person name="Sehra H.K."/>
            <person name="Shaw-Smith C."/>
            <person name="Shen H."/>
            <person name="Sheridan E.M."/>
            <person name="Shownkeen R."/>
            <person name="Skuce C.D."/>
            <person name="Smith M.L."/>
            <person name="Sotheran E.C."/>
            <person name="Steingruber H.E."/>
            <person name="Steward C.A."/>
            <person name="Storey R."/>
            <person name="Swann R.M."/>
            <person name="Swarbreck D."/>
            <person name="Tabor P.E."/>
            <person name="Taudien S."/>
            <person name="Taylor T."/>
            <person name="Teague B."/>
            <person name="Thomas K."/>
            <person name="Thorpe A."/>
            <person name="Timms K."/>
            <person name="Tracey A."/>
            <person name="Trevanion S."/>
            <person name="Tromans A.C."/>
            <person name="d'Urso M."/>
            <person name="Verduzco D."/>
            <person name="Villasana D."/>
            <person name="Waldron L."/>
            <person name="Wall M."/>
            <person name="Wang Q."/>
            <person name="Warren J."/>
            <person name="Warry G.L."/>
            <person name="Wei X."/>
            <person name="West A."/>
            <person name="Whitehead S.L."/>
            <person name="Whiteley M.N."/>
            <person name="Wilkinson J.E."/>
            <person name="Willey D.L."/>
            <person name="Williams G."/>
            <person name="Williams L."/>
            <person name="Williamson A."/>
            <person name="Williamson H."/>
            <person name="Wilming L."/>
            <person name="Woodmansey R.L."/>
            <person name="Wray P.W."/>
            <person name="Yen J."/>
            <person name="Zhang J."/>
            <person name="Zhou J."/>
            <person name="Zoghbi H."/>
            <person name="Zorilla S."/>
            <person name="Buck D."/>
            <person name="Reinhardt R."/>
            <person name="Poustka A."/>
            <person name="Rosenthal A."/>
            <person name="Lehrach H."/>
            <person name="Meindl A."/>
            <person name="Minx P.J."/>
            <person name="Hillier L.W."/>
            <person name="Willard H.F."/>
            <person name="Wilson R.K."/>
            <person name="Waterston R.H."/>
            <person name="Rice C.M."/>
            <person name="Vaudin M."/>
            <person name="Coulson A."/>
            <person name="Nelson D.L."/>
            <person name="Weinstock G."/>
            <person name="Sulston J.E."/>
            <person name="Durbin R.M."/>
            <person name="Hubbard T."/>
            <person name="Gibbs R.A."/>
            <person name="Beck S."/>
            <person name="Rogers J."/>
            <person name="Bentley D.R."/>
        </authorList>
    </citation>
    <scope>NUCLEOTIDE SEQUENCE [LARGE SCALE GENOMIC DNA]</scope>
</reference>
<reference key="4">
    <citation type="journal article" date="2004" name="Genome Res.">
        <title>The status, quality, and expansion of the NIH full-length cDNA project: the Mammalian Gene Collection (MGC).</title>
        <authorList>
            <consortium name="The MGC Project Team"/>
        </authorList>
    </citation>
    <scope>NUCLEOTIDE SEQUENCE [LARGE SCALE MRNA] (ISOFORM 3)</scope>
    <source>
        <tissue>Placenta</tissue>
    </source>
</reference>
<reference key="5">
    <citation type="journal article" date="2013" name="J. Proteome Res.">
        <title>Toward a comprehensive characterization of a human cancer cell phosphoproteome.</title>
        <authorList>
            <person name="Zhou H."/>
            <person name="Di Palma S."/>
            <person name="Preisinger C."/>
            <person name="Peng M."/>
            <person name="Polat A.N."/>
            <person name="Heck A.J."/>
            <person name="Mohammed S."/>
        </authorList>
    </citation>
    <scope>PHOSPHORYLATION [LARGE SCALE ANALYSIS] AT SER-16</scope>
    <scope>IDENTIFICATION BY MASS SPECTROMETRY [LARGE SCALE ANALYSIS]</scope>
    <source>
        <tissue>Erythroleukemia</tissue>
    </source>
</reference>
<reference key="6">
    <citation type="journal article" date="2017" name="Gene">
        <title>X-linked elliptocytosis with impaired growth is related to mutated AMMECR1.</title>
        <authorList>
            <person name="Basel-Vanagaite L."/>
            <person name="Pillar N."/>
            <person name="Isakov O."/>
            <person name="Smirin-Yosef P."/>
            <person name="Lagovsky I."/>
            <person name="Orenstein N."/>
            <person name="Salmon-Divon M."/>
            <person name="Tamary H."/>
            <person name="Zaft T."/>
            <person name="Bazak L."/>
            <person name="Meyerovitch J."/>
            <person name="Pelli T."/>
            <person name="Botchan S."/>
            <person name="Farberov L."/>
            <person name="Weissglas-Volkov D."/>
            <person name="Shomron N."/>
        </authorList>
    </citation>
    <scope>INVOLVEMENT IN MFHIEN</scope>
</reference>
<reference key="7">
    <citation type="journal article" date="2017" name="J. Med. Genet.">
        <title>AMMECR1: a single point mutation causes developmental delay, midface hypoplasia and elliptocytosis.</title>
        <authorList>
            <person name="Andreoletti G."/>
            <person name="Seaby E.G."/>
            <person name="Dewing J.M."/>
            <person name="O'Kelly I."/>
            <person name="Lachlan K."/>
            <person name="Gilbert R.D."/>
            <person name="Ennis S."/>
        </authorList>
    </citation>
    <scope>VARIANT MFHIEN ASP-177</scope>
    <scope>CHARACTERIZATION OF VARIANT MFHIEN ASP-177</scope>
    <scope>INVOLVEMENT IN MFHIEN</scope>
    <scope>SUBCELLULAR LOCATION</scope>
</reference>
<proteinExistence type="evidence at protein level"/>
<keyword id="KW-0023">Alport syndrome</keyword>
<keyword id="KW-0025">Alternative splicing</keyword>
<keyword id="KW-0209">Deafness</keyword>
<keyword id="KW-0225">Disease variant</keyword>
<keyword id="KW-0250">Elliptocytosis</keyword>
<keyword id="KW-0360">Hereditary hemolytic anemia</keyword>
<keyword id="KW-0991">Intellectual disability</keyword>
<keyword id="KW-0539">Nucleus</keyword>
<keyword id="KW-0597">Phosphoprotein</keyword>
<keyword id="KW-1267">Proteomics identification</keyword>
<keyword id="KW-1185">Reference proteome</keyword>
<evidence type="ECO:0000255" key="1">
    <source>
        <dbReference type="PROSITE-ProRule" id="PRU00467"/>
    </source>
</evidence>
<evidence type="ECO:0000256" key="2">
    <source>
        <dbReference type="SAM" id="MobiDB-lite"/>
    </source>
</evidence>
<evidence type="ECO:0000269" key="3">
    <source>
    </source>
</evidence>
<evidence type="ECO:0000269" key="4">
    <source>
    </source>
</evidence>
<evidence type="ECO:0000269" key="5">
    <source>
    </source>
</evidence>
<evidence type="ECO:0000303" key="6">
    <source>
    </source>
</evidence>
<evidence type="ECO:0000303" key="7">
    <source>
    </source>
</evidence>
<evidence type="ECO:0000303" key="8">
    <source>
    </source>
</evidence>
<evidence type="ECO:0000305" key="9"/>
<evidence type="ECO:0007744" key="10">
    <source>
    </source>
</evidence>